<organism>
    <name type="scientific">Acholeplasma laidlawii (strain PG-8A)</name>
    <dbReference type="NCBI Taxonomy" id="441768"/>
    <lineage>
        <taxon>Bacteria</taxon>
        <taxon>Bacillati</taxon>
        <taxon>Mycoplasmatota</taxon>
        <taxon>Mollicutes</taxon>
        <taxon>Acholeplasmatales</taxon>
        <taxon>Acholeplasmataceae</taxon>
        <taxon>Acholeplasma</taxon>
    </lineage>
</organism>
<comment type="function">
    <text evidence="1">Binds 23S rRNA and is also seen to make contacts with the A and possibly P site tRNAs.</text>
</comment>
<comment type="subunit">
    <text evidence="1">Part of the 50S ribosomal subunit.</text>
</comment>
<comment type="similarity">
    <text evidence="1">Belongs to the universal ribosomal protein uL16 family.</text>
</comment>
<gene>
    <name evidence="1" type="primary">rplP</name>
    <name type="ordered locus">ACL_0094</name>
</gene>
<protein>
    <recommendedName>
        <fullName evidence="1">Large ribosomal subunit protein uL16</fullName>
    </recommendedName>
    <alternativeName>
        <fullName evidence="2">50S ribosomal protein L16</fullName>
    </alternativeName>
</protein>
<feature type="chain" id="PRO_1000086740" description="Large ribosomal subunit protein uL16">
    <location>
        <begin position="1"/>
        <end position="138"/>
    </location>
</feature>
<sequence>MLMPKRTKYRRPHRVSYEGKAKGRNEIINGDFALVAKEGAWITNRQIEAARIAMTREMKRLGKVWINIFPHLAKTKKPMEVRMGSGKGAPDSWVAVVKEGKIMFEINGVSEATAREALRKAGHKLPIKVKIVKRGEEA</sequence>
<dbReference type="EMBL" id="CP000896">
    <property type="protein sequence ID" value="ABX80720.1"/>
    <property type="molecule type" value="Genomic_DNA"/>
</dbReference>
<dbReference type="RefSeq" id="WP_012242051.1">
    <property type="nucleotide sequence ID" value="NC_010163.1"/>
</dbReference>
<dbReference type="SMR" id="A9NEE0"/>
<dbReference type="STRING" id="441768.ACL_0094"/>
<dbReference type="GeneID" id="41338296"/>
<dbReference type="KEGG" id="acl:ACL_0094"/>
<dbReference type="eggNOG" id="COG0197">
    <property type="taxonomic scope" value="Bacteria"/>
</dbReference>
<dbReference type="HOGENOM" id="CLU_078858_2_1_14"/>
<dbReference type="OrthoDB" id="9802589at2"/>
<dbReference type="Proteomes" id="UP000008558">
    <property type="component" value="Chromosome"/>
</dbReference>
<dbReference type="GO" id="GO:0022625">
    <property type="term" value="C:cytosolic large ribosomal subunit"/>
    <property type="evidence" value="ECO:0007669"/>
    <property type="project" value="TreeGrafter"/>
</dbReference>
<dbReference type="GO" id="GO:0019843">
    <property type="term" value="F:rRNA binding"/>
    <property type="evidence" value="ECO:0007669"/>
    <property type="project" value="UniProtKB-UniRule"/>
</dbReference>
<dbReference type="GO" id="GO:0003735">
    <property type="term" value="F:structural constituent of ribosome"/>
    <property type="evidence" value="ECO:0007669"/>
    <property type="project" value="InterPro"/>
</dbReference>
<dbReference type="GO" id="GO:0000049">
    <property type="term" value="F:tRNA binding"/>
    <property type="evidence" value="ECO:0007669"/>
    <property type="project" value="UniProtKB-KW"/>
</dbReference>
<dbReference type="GO" id="GO:0006412">
    <property type="term" value="P:translation"/>
    <property type="evidence" value="ECO:0007669"/>
    <property type="project" value="UniProtKB-UniRule"/>
</dbReference>
<dbReference type="CDD" id="cd01433">
    <property type="entry name" value="Ribosomal_L16_L10e"/>
    <property type="match status" value="1"/>
</dbReference>
<dbReference type="FunFam" id="3.90.1170.10:FF:000001">
    <property type="entry name" value="50S ribosomal protein L16"/>
    <property type="match status" value="1"/>
</dbReference>
<dbReference type="Gene3D" id="3.90.1170.10">
    <property type="entry name" value="Ribosomal protein L10e/L16"/>
    <property type="match status" value="1"/>
</dbReference>
<dbReference type="HAMAP" id="MF_01342">
    <property type="entry name" value="Ribosomal_uL16"/>
    <property type="match status" value="1"/>
</dbReference>
<dbReference type="InterPro" id="IPR047873">
    <property type="entry name" value="Ribosomal_uL16"/>
</dbReference>
<dbReference type="InterPro" id="IPR000114">
    <property type="entry name" value="Ribosomal_uL16_bact-type"/>
</dbReference>
<dbReference type="InterPro" id="IPR020798">
    <property type="entry name" value="Ribosomal_uL16_CS"/>
</dbReference>
<dbReference type="InterPro" id="IPR016180">
    <property type="entry name" value="Ribosomal_uL16_dom"/>
</dbReference>
<dbReference type="InterPro" id="IPR036920">
    <property type="entry name" value="Ribosomal_uL16_sf"/>
</dbReference>
<dbReference type="NCBIfam" id="TIGR01164">
    <property type="entry name" value="rplP_bact"/>
    <property type="match status" value="1"/>
</dbReference>
<dbReference type="PANTHER" id="PTHR12220">
    <property type="entry name" value="50S/60S RIBOSOMAL PROTEIN L16"/>
    <property type="match status" value="1"/>
</dbReference>
<dbReference type="PANTHER" id="PTHR12220:SF13">
    <property type="entry name" value="LARGE RIBOSOMAL SUBUNIT PROTEIN UL16M"/>
    <property type="match status" value="1"/>
</dbReference>
<dbReference type="Pfam" id="PF00252">
    <property type="entry name" value="Ribosomal_L16"/>
    <property type="match status" value="1"/>
</dbReference>
<dbReference type="PRINTS" id="PR00060">
    <property type="entry name" value="RIBOSOMALL16"/>
</dbReference>
<dbReference type="SUPFAM" id="SSF54686">
    <property type="entry name" value="Ribosomal protein L16p/L10e"/>
    <property type="match status" value="1"/>
</dbReference>
<dbReference type="PROSITE" id="PS00586">
    <property type="entry name" value="RIBOSOMAL_L16_1"/>
    <property type="match status" value="1"/>
</dbReference>
<dbReference type="PROSITE" id="PS00701">
    <property type="entry name" value="RIBOSOMAL_L16_2"/>
    <property type="match status" value="1"/>
</dbReference>
<name>RL16_ACHLI</name>
<reference key="1">
    <citation type="journal article" date="2011" name="J. Bacteriol.">
        <title>Complete genome and proteome of Acholeplasma laidlawii.</title>
        <authorList>
            <person name="Lazarev V.N."/>
            <person name="Levitskii S.A."/>
            <person name="Basovskii Y.I."/>
            <person name="Chukin M.M."/>
            <person name="Akopian T.A."/>
            <person name="Vereshchagin V.V."/>
            <person name="Kostrjukova E.S."/>
            <person name="Kovaleva G.Y."/>
            <person name="Kazanov M.D."/>
            <person name="Malko D.B."/>
            <person name="Vitreschak A.G."/>
            <person name="Sernova N.V."/>
            <person name="Gelfand M.S."/>
            <person name="Demina I.A."/>
            <person name="Serebryakova M.V."/>
            <person name="Galyamina M.A."/>
            <person name="Vtyurin N.N."/>
            <person name="Rogov S.I."/>
            <person name="Alexeev D.G."/>
            <person name="Ladygina V.G."/>
            <person name="Govorun V.M."/>
        </authorList>
    </citation>
    <scope>NUCLEOTIDE SEQUENCE [LARGE SCALE GENOMIC DNA]</scope>
    <source>
        <strain>PG-8A</strain>
    </source>
</reference>
<proteinExistence type="inferred from homology"/>
<evidence type="ECO:0000255" key="1">
    <source>
        <dbReference type="HAMAP-Rule" id="MF_01342"/>
    </source>
</evidence>
<evidence type="ECO:0000305" key="2"/>
<keyword id="KW-1185">Reference proteome</keyword>
<keyword id="KW-0687">Ribonucleoprotein</keyword>
<keyword id="KW-0689">Ribosomal protein</keyword>
<keyword id="KW-0694">RNA-binding</keyword>
<keyword id="KW-0699">rRNA-binding</keyword>
<keyword id="KW-0820">tRNA-binding</keyword>
<accession>A9NEE0</accession>